<gene>
    <name type="primary">pol5</name>
    <name type="ORF">SPBC14C8.14c</name>
</gene>
<proteinExistence type="evidence at protein level"/>
<organism>
    <name type="scientific">Schizosaccharomyces pombe (strain 972 / ATCC 24843)</name>
    <name type="common">Fission yeast</name>
    <dbReference type="NCBI Taxonomy" id="284812"/>
    <lineage>
        <taxon>Eukaryota</taxon>
        <taxon>Fungi</taxon>
        <taxon>Dikarya</taxon>
        <taxon>Ascomycota</taxon>
        <taxon>Taphrinomycotina</taxon>
        <taxon>Schizosaccharomycetes</taxon>
        <taxon>Schizosaccharomycetales</taxon>
        <taxon>Schizosaccharomycetaceae</taxon>
        <taxon>Schizosaccharomyces</taxon>
    </lineage>
</organism>
<protein>
    <recommendedName>
        <fullName>rDNA transcriptional regulator pol5</fullName>
    </recommendedName>
    <alternativeName>
        <fullName>DNA polymerase V</fullName>
        <shortName>POL V</shortName>
    </alternativeName>
    <alternativeName>
        <fullName>DNA polymerase phi</fullName>
    </alternativeName>
</protein>
<keyword id="KW-0539">Nucleus</keyword>
<keyword id="KW-0597">Phosphoprotein</keyword>
<keyword id="KW-1185">Reference proteome</keyword>
<reference key="1">
    <citation type="journal article" date="2002" name="Proc. Natl. Acad. Sci. U.S.A.">
        <title>The fifth essential DNA polymerase phi in Saccharomyces cerevisiae is localized to the nucleolus and plays an important role in synthesis of rRNA.</title>
        <authorList>
            <person name="Shimizu K."/>
            <person name="Kawasaki Y."/>
            <person name="Hiraga S."/>
            <person name="Tawaramoto M."/>
            <person name="Nakashima N."/>
            <person name="Sugino A."/>
        </authorList>
    </citation>
    <scope>NUCLEOTIDE SEQUENCE [MRNA]</scope>
</reference>
<reference key="2">
    <citation type="journal article" date="1999" name="Yeast">
        <title>DNA sequencing and analysis of a 67.4 kb region from the right arm of Schizosaccharomyces pombe chromosome II reveals 28 open reading frames including the genes his5, pol5, ppa2, rip1, rpb8 and skb1.</title>
        <authorList>
            <person name="Xiang Z."/>
            <person name="Lyne M.H."/>
            <person name="Wood V."/>
            <person name="Rajandream M.A."/>
            <person name="Barrell B.G."/>
            <person name="Aves S.J."/>
        </authorList>
    </citation>
    <scope>NUCLEOTIDE SEQUENCE [GENOMIC DNA]</scope>
</reference>
<reference key="3">
    <citation type="journal article" date="2002" name="Nature">
        <title>The genome sequence of Schizosaccharomyces pombe.</title>
        <authorList>
            <person name="Wood V."/>
            <person name="Gwilliam R."/>
            <person name="Rajandream M.A."/>
            <person name="Lyne M.H."/>
            <person name="Lyne R."/>
            <person name="Stewart A."/>
            <person name="Sgouros J.G."/>
            <person name="Peat N."/>
            <person name="Hayles J."/>
            <person name="Baker S.G."/>
            <person name="Basham D."/>
            <person name="Bowman S."/>
            <person name="Brooks K."/>
            <person name="Brown D."/>
            <person name="Brown S."/>
            <person name="Chillingworth T."/>
            <person name="Churcher C.M."/>
            <person name="Collins M."/>
            <person name="Connor R."/>
            <person name="Cronin A."/>
            <person name="Davis P."/>
            <person name="Feltwell T."/>
            <person name="Fraser A."/>
            <person name="Gentles S."/>
            <person name="Goble A."/>
            <person name="Hamlin N."/>
            <person name="Harris D.E."/>
            <person name="Hidalgo J."/>
            <person name="Hodgson G."/>
            <person name="Holroyd S."/>
            <person name="Hornsby T."/>
            <person name="Howarth S."/>
            <person name="Huckle E.J."/>
            <person name="Hunt S."/>
            <person name="Jagels K."/>
            <person name="James K.D."/>
            <person name="Jones L."/>
            <person name="Jones M."/>
            <person name="Leather S."/>
            <person name="McDonald S."/>
            <person name="McLean J."/>
            <person name="Mooney P."/>
            <person name="Moule S."/>
            <person name="Mungall K.L."/>
            <person name="Murphy L.D."/>
            <person name="Niblett D."/>
            <person name="Odell C."/>
            <person name="Oliver K."/>
            <person name="O'Neil S."/>
            <person name="Pearson D."/>
            <person name="Quail M.A."/>
            <person name="Rabbinowitsch E."/>
            <person name="Rutherford K.M."/>
            <person name="Rutter S."/>
            <person name="Saunders D."/>
            <person name="Seeger K."/>
            <person name="Sharp S."/>
            <person name="Skelton J."/>
            <person name="Simmonds M.N."/>
            <person name="Squares R."/>
            <person name="Squares S."/>
            <person name="Stevens K."/>
            <person name="Taylor K."/>
            <person name="Taylor R.G."/>
            <person name="Tivey A."/>
            <person name="Walsh S.V."/>
            <person name="Warren T."/>
            <person name="Whitehead S."/>
            <person name="Woodward J.R."/>
            <person name="Volckaert G."/>
            <person name="Aert R."/>
            <person name="Robben J."/>
            <person name="Grymonprez B."/>
            <person name="Weltjens I."/>
            <person name="Vanstreels E."/>
            <person name="Rieger M."/>
            <person name="Schaefer M."/>
            <person name="Mueller-Auer S."/>
            <person name="Gabel C."/>
            <person name="Fuchs M."/>
            <person name="Duesterhoeft A."/>
            <person name="Fritzc C."/>
            <person name="Holzer E."/>
            <person name="Moestl D."/>
            <person name="Hilbert H."/>
            <person name="Borzym K."/>
            <person name="Langer I."/>
            <person name="Beck A."/>
            <person name="Lehrach H."/>
            <person name="Reinhardt R."/>
            <person name="Pohl T.M."/>
            <person name="Eger P."/>
            <person name="Zimmermann W."/>
            <person name="Wedler H."/>
            <person name="Wambutt R."/>
            <person name="Purnelle B."/>
            <person name="Goffeau A."/>
            <person name="Cadieu E."/>
            <person name="Dreano S."/>
            <person name="Gloux S."/>
            <person name="Lelaure V."/>
            <person name="Mottier S."/>
            <person name="Galibert F."/>
            <person name="Aves S.J."/>
            <person name="Xiang Z."/>
            <person name="Hunt C."/>
            <person name="Moore K."/>
            <person name="Hurst S.M."/>
            <person name="Lucas M."/>
            <person name="Rochet M."/>
            <person name="Gaillardin C."/>
            <person name="Tallada V.A."/>
            <person name="Garzon A."/>
            <person name="Thode G."/>
            <person name="Daga R.R."/>
            <person name="Cruzado L."/>
            <person name="Jimenez J."/>
            <person name="Sanchez M."/>
            <person name="del Rey F."/>
            <person name="Benito J."/>
            <person name="Dominguez A."/>
            <person name="Revuelta J.L."/>
            <person name="Moreno S."/>
            <person name="Armstrong J."/>
            <person name="Forsburg S.L."/>
            <person name="Cerutti L."/>
            <person name="Lowe T."/>
            <person name="McCombie W.R."/>
            <person name="Paulsen I."/>
            <person name="Potashkin J."/>
            <person name="Shpakovski G.V."/>
            <person name="Ussery D."/>
            <person name="Barrell B.G."/>
            <person name="Nurse P."/>
        </authorList>
    </citation>
    <scope>NUCLEOTIDE SEQUENCE [LARGE SCALE GENOMIC DNA]</scope>
    <source>
        <strain>972 / ATCC 24843</strain>
    </source>
</reference>
<reference key="4">
    <citation type="journal article" date="2000" name="Genes Cells">
        <title>Large-scale screening of intracellular protein localization in living fission yeast cells by the use of a GFP-fusion genomic DNA library.</title>
        <authorList>
            <person name="Ding D.-Q."/>
            <person name="Tomita Y."/>
            <person name="Yamamoto A."/>
            <person name="Chikashige Y."/>
            <person name="Haraguchi T."/>
            <person name="Hiraoka Y."/>
        </authorList>
    </citation>
    <scope>NUCLEOTIDE SEQUENCE [LARGE SCALE GENOMIC DNA] OF 613-795</scope>
    <source>
        <strain>ATCC 38364 / 968</strain>
    </source>
</reference>
<reference key="5">
    <citation type="journal article" date="2003" name="Cell Cycle">
        <title>Yeast POL5 is an evolutionarily conserved regulator of rDNA transcription unrelated to any known DNA polymerases.</title>
        <authorList>
            <person name="Yang W."/>
            <person name="Rogozin I.B."/>
            <person name="Koonin E.V."/>
        </authorList>
    </citation>
    <scope>PROTEIN FAMILY</scope>
</reference>
<reference key="6">
    <citation type="journal article" date="2006" name="Mol. Genet. Genomics">
        <title>Pol5p, a novel binding partner to Cdc10p in fission yeast involved in rRNA production.</title>
        <authorList>
            <person name="Nadeem F.K."/>
            <person name="Blair D."/>
            <person name="McInerny C.J."/>
        </authorList>
    </citation>
    <scope>FUNCTION</scope>
    <scope>INTERACTION WITH CDC10</scope>
    <scope>SUBCELLULAR LOCATION</scope>
</reference>
<reference key="7">
    <citation type="journal article" date="2008" name="J. Proteome Res.">
        <title>Phosphoproteome analysis of fission yeast.</title>
        <authorList>
            <person name="Wilson-Grady J.T."/>
            <person name="Villen J."/>
            <person name="Gygi S.P."/>
        </authorList>
    </citation>
    <scope>PHOSPHORYLATION [LARGE SCALE ANALYSIS] AT SER-742 AND SER-743</scope>
    <scope>IDENTIFICATION BY MASS SPECTROMETRY</scope>
</reference>
<sequence>MATKTQLELFTKLTSNDKAIRLSSAAQLIDSLSNEEELKYSLNRLTKGLSSGRESARIGFAVALTELLTRTKDIRATHVLDLLVKHNTASGNLKGQDERDFYFGLLFGLQSIVYSGILTHKESTIEDFQRVVDLLLQLSGKKNWLQDVCFYVIYKLVEQIPEISFSSNAFLAVNKLLQTPAVSKSTEGVGLFLCLTRVPDNVKSEEVAMANWEPAHPLHKSNLVTLSKIMRQADASETGGQNSAWKQKIPMVWKYIFEEYQRKTYSGLAPFHDFWAVVVDEGIFSSTSSLERKFWGFQIMELALDYVSSDNIGDIFSKNFLHCLINHLSDEDRYLYRAAKRVTSKLEKVSKQNPTLVYPIAIHLLGERGSLNFDRVTNTKLVEHILPLADEQGILQLFQLLLSYVKRCPEDIASDTKAVEWRRQWATDTMLSILRSKRSIKQEPWVRELLEIFIAYGYFEVPESEEVIPKFSEGTQNMFRLRLMSALSYLSSSAFQQSQTDHQLGDKNWPYVALNYLLELEKSPKNNLLISMDESVIEIVQKSLSVLHKVTKKIDKKAQHLQQLNAFQLLYSLVLLQVYAGDTDSIDVLEDIDNCYSKVFNKKSKRESTSNEPTAMEILTEVMLSLLSRPSLLLRKLVDMLFTSFSEDMNRESIHLICDVLKAKESVKDSEGMFAGEEVEEDAFGETEMDEDDFEEIDTDEIEEQSDWEMISNQDASDNEELERKLDKVLEDADAKVKDEESSEEELMNDEQMLALDEKLAEVFRERKKASNKEKKKNAQETKQQIVQFKVKVIDLIDNYYKTQPNNGLGFEFLIPLLEMILKTKHKVLEEKGQAVFRNRLSKLKWTEEKPSSKNVLEALKKVHVLCGKKASLGSTGSSISQLLLKLLADTPYLKEGVEVYLKSFLLWIQEPSKSHYNANIFHDFINWGAQQRLKHQQTSTAASSPQKTGHHENEKTNH</sequence>
<dbReference type="EMBL" id="AB012696">
    <property type="protein sequence ID" value="BAA32046.1"/>
    <property type="molecule type" value="mRNA"/>
</dbReference>
<dbReference type="EMBL" id="CU329671">
    <property type="protein sequence ID" value="CAA18436.1"/>
    <property type="molecule type" value="Genomic_DNA"/>
</dbReference>
<dbReference type="EMBL" id="AB027997">
    <property type="protein sequence ID" value="BAA87301.1"/>
    <property type="molecule type" value="Genomic_DNA"/>
</dbReference>
<dbReference type="PIR" id="T00246">
    <property type="entry name" value="T00246"/>
</dbReference>
<dbReference type="RefSeq" id="NP_595917.1">
    <property type="nucleotide sequence ID" value="NM_001021825.2"/>
</dbReference>
<dbReference type="BioGRID" id="276383">
    <property type="interactions" value="7"/>
</dbReference>
<dbReference type="FunCoup" id="O60094">
    <property type="interactions" value="482"/>
</dbReference>
<dbReference type="IntAct" id="O60094">
    <property type="interactions" value="1"/>
</dbReference>
<dbReference type="STRING" id="284812.O60094"/>
<dbReference type="iPTMnet" id="O60094"/>
<dbReference type="PaxDb" id="4896-SPBC14C8.14c.1"/>
<dbReference type="EnsemblFungi" id="SPBC14C8.14c.1">
    <property type="protein sequence ID" value="SPBC14C8.14c.1:pep"/>
    <property type="gene ID" value="SPBC14C8.14c"/>
</dbReference>
<dbReference type="GeneID" id="2539834"/>
<dbReference type="KEGG" id="spo:2539834"/>
<dbReference type="PomBase" id="SPBC14C8.14c">
    <property type="gene designation" value="pol5"/>
</dbReference>
<dbReference type="VEuPathDB" id="FungiDB:SPBC14C8.14c"/>
<dbReference type="eggNOG" id="KOG1926">
    <property type="taxonomic scope" value="Eukaryota"/>
</dbReference>
<dbReference type="HOGENOM" id="CLU_005212_1_0_1"/>
<dbReference type="InParanoid" id="O60094"/>
<dbReference type="OMA" id="VWKHDDP"/>
<dbReference type="PhylomeDB" id="O60094"/>
<dbReference type="PRO" id="PR:O60094"/>
<dbReference type="Proteomes" id="UP000002485">
    <property type="component" value="Chromosome II"/>
</dbReference>
<dbReference type="GO" id="GO:0005829">
    <property type="term" value="C:cytosol"/>
    <property type="evidence" value="ECO:0007005"/>
    <property type="project" value="PomBase"/>
</dbReference>
<dbReference type="GO" id="GO:0005730">
    <property type="term" value="C:nucleolus"/>
    <property type="evidence" value="ECO:0007005"/>
    <property type="project" value="PomBase"/>
</dbReference>
<dbReference type="GO" id="GO:0005634">
    <property type="term" value="C:nucleus"/>
    <property type="evidence" value="ECO:0000314"/>
    <property type="project" value="PomBase"/>
</dbReference>
<dbReference type="GO" id="GO:0000166">
    <property type="term" value="F:nucleotide binding"/>
    <property type="evidence" value="ECO:0007669"/>
    <property type="project" value="InterPro"/>
</dbReference>
<dbReference type="GO" id="GO:0000182">
    <property type="term" value="F:rDNA binding"/>
    <property type="evidence" value="ECO:0000314"/>
    <property type="project" value="UniProtKB"/>
</dbReference>
<dbReference type="GO" id="GO:0001163">
    <property type="term" value="F:RNA polymerase I transcription regulatory region sequence-specific DNA binding"/>
    <property type="evidence" value="ECO:0000314"/>
    <property type="project" value="PomBase"/>
</dbReference>
<dbReference type="GO" id="GO:0006355">
    <property type="term" value="P:regulation of DNA-templated transcription"/>
    <property type="evidence" value="ECO:0007669"/>
    <property type="project" value="InterPro"/>
</dbReference>
<dbReference type="GO" id="GO:0006364">
    <property type="term" value="P:rRNA processing"/>
    <property type="evidence" value="ECO:0000266"/>
    <property type="project" value="PomBase"/>
</dbReference>
<dbReference type="GO" id="GO:0009303">
    <property type="term" value="P:rRNA transcription"/>
    <property type="evidence" value="ECO:0000314"/>
    <property type="project" value="UniProtKB"/>
</dbReference>
<dbReference type="InterPro" id="IPR016024">
    <property type="entry name" value="ARM-type_fold"/>
</dbReference>
<dbReference type="InterPro" id="IPR017964">
    <property type="entry name" value="DNA-dir_DNA_pol_B_CS"/>
</dbReference>
<dbReference type="InterPro" id="IPR007015">
    <property type="entry name" value="DNA_pol_V/MYBBP1A"/>
</dbReference>
<dbReference type="PANTHER" id="PTHR13213:SF2">
    <property type="entry name" value="MYB-BINDING PROTEIN 1A"/>
    <property type="match status" value="1"/>
</dbReference>
<dbReference type="PANTHER" id="PTHR13213">
    <property type="entry name" value="MYB-BINDING PROTEIN 1A FAMILY MEMBER"/>
    <property type="match status" value="1"/>
</dbReference>
<dbReference type="Pfam" id="PF04931">
    <property type="entry name" value="DNA_pol_phi"/>
    <property type="match status" value="1"/>
</dbReference>
<dbReference type="SUPFAM" id="SSF48371">
    <property type="entry name" value="ARM repeat"/>
    <property type="match status" value="1"/>
</dbReference>
<dbReference type="PROSITE" id="PS00116">
    <property type="entry name" value="DNA_POLYMERASE_B"/>
    <property type="match status" value="1"/>
</dbReference>
<feature type="chain" id="PRO_0000046471" description="rDNA transcriptional regulator pol5">
    <location>
        <begin position="1"/>
        <end position="959"/>
    </location>
</feature>
<feature type="region of interest" description="Disordered" evidence="1">
    <location>
        <begin position="936"/>
        <end position="959"/>
    </location>
</feature>
<feature type="compositionally biased region" description="Polar residues" evidence="1">
    <location>
        <begin position="937"/>
        <end position="948"/>
    </location>
</feature>
<feature type="compositionally biased region" description="Basic and acidic residues" evidence="1">
    <location>
        <begin position="950"/>
        <end position="959"/>
    </location>
</feature>
<feature type="modified residue" description="Phosphoserine" evidence="3">
    <location>
        <position position="742"/>
    </location>
</feature>
<feature type="modified residue" description="Phosphoserine" evidence="3">
    <location>
        <position position="743"/>
    </location>
</feature>
<accession>O60094</accession>
<accession>Q9UTU3</accession>
<name>DPO5_SCHPO</name>
<evidence type="ECO:0000256" key="1">
    <source>
        <dbReference type="SAM" id="MobiDB-lite"/>
    </source>
</evidence>
<evidence type="ECO:0000269" key="2">
    <source>
    </source>
</evidence>
<evidence type="ECO:0000269" key="3">
    <source>
    </source>
</evidence>
<evidence type="ECO:0000305" key="4"/>
<evidence type="ECO:0000305" key="5">
    <source>
    </source>
</evidence>
<evidence type="ECO:0000305" key="6">
    <source>
    </source>
</evidence>
<comment type="function">
    <text evidence="2">Plays an important role in the regulation of rRNA transcription. Binds to rDNA promoter fragments.</text>
</comment>
<comment type="subunit">
    <text evidence="2">Interacts with cdc10.</text>
</comment>
<comment type="interaction">
    <interactant intactId="EBI-1009362">
        <id>O60094</id>
    </interactant>
    <interactant intactId="EBI-1009350">
        <id>P01129</id>
        <label>cdc10</label>
    </interactant>
    <organismsDiffer>false</organismsDiffer>
    <experiments>2</experiments>
</comment>
<comment type="subcellular location">
    <subcellularLocation>
        <location evidence="2">Nucleus</location>
    </subcellularLocation>
</comment>
<comment type="similarity">
    <text evidence="4">Belongs to the MYBBP1A family.</text>
</comment>
<comment type="caution">
    <text evidence="5 6">Was originally thought to belong to the DNA polymerase type-B family based on conserved motifs (PubMed:12093911). Has later been shown to be unrelated to B class DNA polymerases (PubMed:12695662).</text>
</comment>